<reference key="1">
    <citation type="journal article" date="2003" name="Proc. Natl. Acad. Sci. U.S.A.">
        <title>The complete genome sequence of the Arabidopsis and tomato pathogen Pseudomonas syringae pv. tomato DC3000.</title>
        <authorList>
            <person name="Buell C.R."/>
            <person name="Joardar V."/>
            <person name="Lindeberg M."/>
            <person name="Selengut J."/>
            <person name="Paulsen I.T."/>
            <person name="Gwinn M.L."/>
            <person name="Dodson R.J."/>
            <person name="DeBoy R.T."/>
            <person name="Durkin A.S."/>
            <person name="Kolonay J.F."/>
            <person name="Madupu R."/>
            <person name="Daugherty S.C."/>
            <person name="Brinkac L.M."/>
            <person name="Beanan M.J."/>
            <person name="Haft D.H."/>
            <person name="Nelson W.C."/>
            <person name="Davidsen T.M."/>
            <person name="Zafar N."/>
            <person name="Zhou L."/>
            <person name="Liu J."/>
            <person name="Yuan Q."/>
            <person name="Khouri H.M."/>
            <person name="Fedorova N.B."/>
            <person name="Tran B."/>
            <person name="Russell D."/>
            <person name="Berry K.J."/>
            <person name="Utterback T.R."/>
            <person name="Van Aken S.E."/>
            <person name="Feldblyum T.V."/>
            <person name="D'Ascenzo M."/>
            <person name="Deng W.-L."/>
            <person name="Ramos A.R."/>
            <person name="Alfano J.R."/>
            <person name="Cartinhour S."/>
            <person name="Chatterjee A.K."/>
            <person name="Delaney T.P."/>
            <person name="Lazarowitz S.G."/>
            <person name="Martin G.B."/>
            <person name="Schneider D.J."/>
            <person name="Tang X."/>
            <person name="Bender C.L."/>
            <person name="White O."/>
            <person name="Fraser C.M."/>
            <person name="Collmer A."/>
        </authorList>
    </citation>
    <scope>NUCLEOTIDE SEQUENCE [LARGE SCALE GENOMIC DNA]</scope>
    <source>
        <strain>ATCC BAA-871 / DC3000</strain>
    </source>
</reference>
<name>SYL_PSESM</name>
<gene>
    <name evidence="1" type="primary">leuS</name>
    <name type="ordered locus">PSPTO_4812</name>
</gene>
<accession>Q87VX3</accession>
<proteinExistence type="inferred from homology"/>
<sequence>MHELYQPREIEAAAQTFWDEQKSFEVSEQPGKETFYCLSMFPYPSGKLHMGHVRNYTIGDVISRYQRMLGKNVLQPLGWDAFGMPAENAAIDNNVAPAKWTYENIAYMKNQLKSLGLAVDWSREVTTCKPDYYRWEQWLFTRLFEKGVIYRKNGTVNWDPIDQTVLANEQVIDGRGWRSGALIEKREIPMYYFKITAYADELLESLDELPGWPEQVKTMQRNWIGRSRGMEVQFPYDQASIGEAGALKVFTTRPDTLMGATYVAVAAEHPLATLAAQGNPALQAFIDECKGGSVAEADVATQEKKGQPTSLFVEHPLTGEKLPVWVANYVLMHYGDGAVMAVPAHDERDFEFASKYDLPIKPVVRTSAGDETPAPWQAEYNEQGPLINSGEFTGLHFQDAFDAIEAALVKKALGQSRTQFRLRDWGISRQRYWGCPIPIVHCDTCGDVPVPEDQLPVILPEDVVPDGAGSPLARMPQFYECSCPKCGAPAKRETDTMDTFVESSWYYARYASPHYEGGLVEPNAANHWLPVDQYIGGIEHAILHLLYARFFHKLMRDEGLVTSNEPFKNLLTQGMVNAETYFRMETSGKKTWINPADVTLERDAKAKVISATLTSDGLPVEIGGTEKMSKSKKNGIDPQTMIDQYGADTCRLFMMFASPPDMSLEWSDSGVEGSHRFLRRVWRLAQAHVGQGASGSLDIAALTDEQKAVRRSIHQAIKQASQDIGQNQKFNTAVAQVMTLMNVLEKAPQATPQDRALLQEGLETVTLLLAPITPHISHELWTQLGHNEPVIDAGWPVFDAHALVQDSLQLVIQVNGKLRGHIEMPASASREEVEAAARINENVLRFTDGLTIRKVIVVPGKLVNIVAS</sequence>
<organism>
    <name type="scientific">Pseudomonas syringae pv. tomato (strain ATCC BAA-871 / DC3000)</name>
    <dbReference type="NCBI Taxonomy" id="223283"/>
    <lineage>
        <taxon>Bacteria</taxon>
        <taxon>Pseudomonadati</taxon>
        <taxon>Pseudomonadota</taxon>
        <taxon>Gammaproteobacteria</taxon>
        <taxon>Pseudomonadales</taxon>
        <taxon>Pseudomonadaceae</taxon>
        <taxon>Pseudomonas</taxon>
    </lineage>
</organism>
<comment type="catalytic activity">
    <reaction evidence="1">
        <text>tRNA(Leu) + L-leucine + ATP = L-leucyl-tRNA(Leu) + AMP + diphosphate</text>
        <dbReference type="Rhea" id="RHEA:11688"/>
        <dbReference type="Rhea" id="RHEA-COMP:9613"/>
        <dbReference type="Rhea" id="RHEA-COMP:9622"/>
        <dbReference type="ChEBI" id="CHEBI:30616"/>
        <dbReference type="ChEBI" id="CHEBI:33019"/>
        <dbReference type="ChEBI" id="CHEBI:57427"/>
        <dbReference type="ChEBI" id="CHEBI:78442"/>
        <dbReference type="ChEBI" id="CHEBI:78494"/>
        <dbReference type="ChEBI" id="CHEBI:456215"/>
        <dbReference type="EC" id="6.1.1.4"/>
    </reaction>
</comment>
<comment type="subcellular location">
    <subcellularLocation>
        <location evidence="1">Cytoplasm</location>
    </subcellularLocation>
</comment>
<comment type="similarity">
    <text evidence="1">Belongs to the class-I aminoacyl-tRNA synthetase family.</text>
</comment>
<evidence type="ECO:0000255" key="1">
    <source>
        <dbReference type="HAMAP-Rule" id="MF_00049"/>
    </source>
</evidence>
<keyword id="KW-0030">Aminoacyl-tRNA synthetase</keyword>
<keyword id="KW-0067">ATP-binding</keyword>
<keyword id="KW-0963">Cytoplasm</keyword>
<keyword id="KW-0436">Ligase</keyword>
<keyword id="KW-0547">Nucleotide-binding</keyword>
<keyword id="KW-0648">Protein biosynthesis</keyword>
<keyword id="KW-1185">Reference proteome</keyword>
<dbReference type="EC" id="6.1.1.4" evidence="1"/>
<dbReference type="EMBL" id="AE016853">
    <property type="protein sequence ID" value="AAO58241.1"/>
    <property type="molecule type" value="Genomic_DNA"/>
</dbReference>
<dbReference type="RefSeq" id="NP_794546.1">
    <property type="nucleotide sequence ID" value="NC_004578.1"/>
</dbReference>
<dbReference type="RefSeq" id="WP_011105190.1">
    <property type="nucleotide sequence ID" value="NC_004578.1"/>
</dbReference>
<dbReference type="SMR" id="Q87VX3"/>
<dbReference type="STRING" id="223283.PSPTO_4812"/>
<dbReference type="GeneID" id="1186495"/>
<dbReference type="KEGG" id="pst:PSPTO_4812"/>
<dbReference type="PATRIC" id="fig|223283.9.peg.4922"/>
<dbReference type="eggNOG" id="COG0495">
    <property type="taxonomic scope" value="Bacteria"/>
</dbReference>
<dbReference type="HOGENOM" id="CLU_004427_0_0_6"/>
<dbReference type="OrthoDB" id="9810365at2"/>
<dbReference type="PhylomeDB" id="Q87VX3"/>
<dbReference type="Proteomes" id="UP000002515">
    <property type="component" value="Chromosome"/>
</dbReference>
<dbReference type="GO" id="GO:0005829">
    <property type="term" value="C:cytosol"/>
    <property type="evidence" value="ECO:0007669"/>
    <property type="project" value="TreeGrafter"/>
</dbReference>
<dbReference type="GO" id="GO:0002161">
    <property type="term" value="F:aminoacyl-tRNA deacylase activity"/>
    <property type="evidence" value="ECO:0007669"/>
    <property type="project" value="InterPro"/>
</dbReference>
<dbReference type="GO" id="GO:0005524">
    <property type="term" value="F:ATP binding"/>
    <property type="evidence" value="ECO:0007669"/>
    <property type="project" value="UniProtKB-UniRule"/>
</dbReference>
<dbReference type="GO" id="GO:0004823">
    <property type="term" value="F:leucine-tRNA ligase activity"/>
    <property type="evidence" value="ECO:0007669"/>
    <property type="project" value="UniProtKB-UniRule"/>
</dbReference>
<dbReference type="GO" id="GO:0006429">
    <property type="term" value="P:leucyl-tRNA aminoacylation"/>
    <property type="evidence" value="ECO:0007669"/>
    <property type="project" value="UniProtKB-UniRule"/>
</dbReference>
<dbReference type="CDD" id="cd07958">
    <property type="entry name" value="Anticodon_Ia_Leu_BEm"/>
    <property type="match status" value="1"/>
</dbReference>
<dbReference type="CDD" id="cd00812">
    <property type="entry name" value="LeuRS_core"/>
    <property type="match status" value="1"/>
</dbReference>
<dbReference type="FunFam" id="1.10.730.10:FF:000003">
    <property type="entry name" value="Leucine--tRNA ligase"/>
    <property type="match status" value="1"/>
</dbReference>
<dbReference type="FunFam" id="2.20.28.290:FF:000001">
    <property type="entry name" value="Leucine--tRNA ligase"/>
    <property type="match status" value="1"/>
</dbReference>
<dbReference type="FunFam" id="3.10.20.590:FF:000001">
    <property type="entry name" value="Leucine--tRNA ligase"/>
    <property type="match status" value="1"/>
</dbReference>
<dbReference type="FunFam" id="3.40.50.620:FF:000003">
    <property type="entry name" value="Leucine--tRNA ligase"/>
    <property type="match status" value="1"/>
</dbReference>
<dbReference type="FunFam" id="3.40.50.620:FF:000124">
    <property type="entry name" value="Leucine--tRNA ligase"/>
    <property type="match status" value="1"/>
</dbReference>
<dbReference type="Gene3D" id="2.20.28.290">
    <property type="match status" value="1"/>
</dbReference>
<dbReference type="Gene3D" id="3.10.20.590">
    <property type="match status" value="1"/>
</dbReference>
<dbReference type="Gene3D" id="3.40.50.620">
    <property type="entry name" value="HUPs"/>
    <property type="match status" value="2"/>
</dbReference>
<dbReference type="Gene3D" id="1.10.730.10">
    <property type="entry name" value="Isoleucyl-tRNA Synthetase, Domain 1"/>
    <property type="match status" value="1"/>
</dbReference>
<dbReference type="HAMAP" id="MF_00049_B">
    <property type="entry name" value="Leu_tRNA_synth_B"/>
    <property type="match status" value="1"/>
</dbReference>
<dbReference type="InterPro" id="IPR001412">
    <property type="entry name" value="aa-tRNA-synth_I_CS"/>
</dbReference>
<dbReference type="InterPro" id="IPR002300">
    <property type="entry name" value="aa-tRNA-synth_Ia"/>
</dbReference>
<dbReference type="InterPro" id="IPR002302">
    <property type="entry name" value="Leu-tRNA-ligase"/>
</dbReference>
<dbReference type="InterPro" id="IPR025709">
    <property type="entry name" value="Leu_tRNA-synth_edit"/>
</dbReference>
<dbReference type="InterPro" id="IPR013155">
    <property type="entry name" value="M/V/L/I-tRNA-synth_anticd-bd"/>
</dbReference>
<dbReference type="InterPro" id="IPR015413">
    <property type="entry name" value="Methionyl/Leucyl_tRNA_Synth"/>
</dbReference>
<dbReference type="InterPro" id="IPR014729">
    <property type="entry name" value="Rossmann-like_a/b/a_fold"/>
</dbReference>
<dbReference type="InterPro" id="IPR009080">
    <property type="entry name" value="tRNAsynth_Ia_anticodon-bd"/>
</dbReference>
<dbReference type="InterPro" id="IPR009008">
    <property type="entry name" value="Val/Leu/Ile-tRNA-synth_edit"/>
</dbReference>
<dbReference type="NCBIfam" id="TIGR00396">
    <property type="entry name" value="leuS_bact"/>
    <property type="match status" value="1"/>
</dbReference>
<dbReference type="PANTHER" id="PTHR43740:SF2">
    <property type="entry name" value="LEUCINE--TRNA LIGASE, MITOCHONDRIAL"/>
    <property type="match status" value="1"/>
</dbReference>
<dbReference type="PANTHER" id="PTHR43740">
    <property type="entry name" value="LEUCYL-TRNA SYNTHETASE"/>
    <property type="match status" value="1"/>
</dbReference>
<dbReference type="Pfam" id="PF08264">
    <property type="entry name" value="Anticodon_1"/>
    <property type="match status" value="1"/>
</dbReference>
<dbReference type="Pfam" id="PF00133">
    <property type="entry name" value="tRNA-synt_1"/>
    <property type="match status" value="2"/>
</dbReference>
<dbReference type="Pfam" id="PF13603">
    <property type="entry name" value="tRNA-synt_1_2"/>
    <property type="match status" value="1"/>
</dbReference>
<dbReference type="Pfam" id="PF09334">
    <property type="entry name" value="tRNA-synt_1g"/>
    <property type="match status" value="1"/>
</dbReference>
<dbReference type="PRINTS" id="PR00985">
    <property type="entry name" value="TRNASYNTHLEU"/>
</dbReference>
<dbReference type="SUPFAM" id="SSF47323">
    <property type="entry name" value="Anticodon-binding domain of a subclass of class I aminoacyl-tRNA synthetases"/>
    <property type="match status" value="1"/>
</dbReference>
<dbReference type="SUPFAM" id="SSF52374">
    <property type="entry name" value="Nucleotidylyl transferase"/>
    <property type="match status" value="1"/>
</dbReference>
<dbReference type="SUPFAM" id="SSF50677">
    <property type="entry name" value="ValRS/IleRS/LeuRS editing domain"/>
    <property type="match status" value="1"/>
</dbReference>
<dbReference type="PROSITE" id="PS00178">
    <property type="entry name" value="AA_TRNA_LIGASE_I"/>
    <property type="match status" value="1"/>
</dbReference>
<protein>
    <recommendedName>
        <fullName evidence="1">Leucine--tRNA ligase</fullName>
        <ecNumber evidence="1">6.1.1.4</ecNumber>
    </recommendedName>
    <alternativeName>
        <fullName evidence="1">Leucyl-tRNA synthetase</fullName>
        <shortName evidence="1">LeuRS</shortName>
    </alternativeName>
</protein>
<feature type="chain" id="PRO_0000152068" description="Leucine--tRNA ligase">
    <location>
        <begin position="1"/>
        <end position="868"/>
    </location>
</feature>
<feature type="short sequence motif" description="'HIGH' region">
    <location>
        <begin position="42"/>
        <end position="52"/>
    </location>
</feature>
<feature type="short sequence motif" description="'KMSKS' region">
    <location>
        <begin position="627"/>
        <end position="631"/>
    </location>
</feature>
<feature type="binding site" evidence="1">
    <location>
        <position position="630"/>
    </location>
    <ligand>
        <name>ATP</name>
        <dbReference type="ChEBI" id="CHEBI:30616"/>
    </ligand>
</feature>